<dbReference type="EC" id="2.7.7.6" evidence="1"/>
<dbReference type="EMBL" id="CP001336">
    <property type="protein sequence ID" value="ACL21909.1"/>
    <property type="molecule type" value="Genomic_DNA"/>
</dbReference>
<dbReference type="RefSeq" id="WP_005811864.1">
    <property type="nucleotide sequence ID" value="NC_011830.1"/>
</dbReference>
<dbReference type="SMR" id="B8FSC1"/>
<dbReference type="KEGG" id="dhd:Dhaf_3893"/>
<dbReference type="HOGENOM" id="CLU_125406_6_1_9"/>
<dbReference type="Proteomes" id="UP000007726">
    <property type="component" value="Chromosome"/>
</dbReference>
<dbReference type="GO" id="GO:0000428">
    <property type="term" value="C:DNA-directed RNA polymerase complex"/>
    <property type="evidence" value="ECO:0007669"/>
    <property type="project" value="UniProtKB-KW"/>
</dbReference>
<dbReference type="GO" id="GO:0003677">
    <property type="term" value="F:DNA binding"/>
    <property type="evidence" value="ECO:0007669"/>
    <property type="project" value="UniProtKB-UniRule"/>
</dbReference>
<dbReference type="GO" id="GO:0003899">
    <property type="term" value="F:DNA-directed RNA polymerase activity"/>
    <property type="evidence" value="ECO:0007669"/>
    <property type="project" value="UniProtKB-UniRule"/>
</dbReference>
<dbReference type="GO" id="GO:0006351">
    <property type="term" value="P:DNA-templated transcription"/>
    <property type="evidence" value="ECO:0007669"/>
    <property type="project" value="UniProtKB-UniRule"/>
</dbReference>
<dbReference type="Gene3D" id="3.90.940.10">
    <property type="match status" value="1"/>
</dbReference>
<dbReference type="HAMAP" id="MF_00366">
    <property type="entry name" value="RNApol_bact_RpoZ"/>
    <property type="match status" value="1"/>
</dbReference>
<dbReference type="InterPro" id="IPR003716">
    <property type="entry name" value="DNA-dir_RNA_pol_omega"/>
</dbReference>
<dbReference type="InterPro" id="IPR006110">
    <property type="entry name" value="Pol_omega/Rpo6/RPB6"/>
</dbReference>
<dbReference type="InterPro" id="IPR036161">
    <property type="entry name" value="RPB6/omega-like_sf"/>
</dbReference>
<dbReference type="NCBIfam" id="TIGR00690">
    <property type="entry name" value="rpoZ"/>
    <property type="match status" value="1"/>
</dbReference>
<dbReference type="PANTHER" id="PTHR34476">
    <property type="entry name" value="DNA-DIRECTED RNA POLYMERASE SUBUNIT OMEGA"/>
    <property type="match status" value="1"/>
</dbReference>
<dbReference type="PANTHER" id="PTHR34476:SF1">
    <property type="entry name" value="DNA-DIRECTED RNA POLYMERASE SUBUNIT OMEGA"/>
    <property type="match status" value="1"/>
</dbReference>
<dbReference type="Pfam" id="PF01192">
    <property type="entry name" value="RNA_pol_Rpb6"/>
    <property type="match status" value="1"/>
</dbReference>
<dbReference type="SMART" id="SM01409">
    <property type="entry name" value="RNA_pol_Rpb6"/>
    <property type="match status" value="1"/>
</dbReference>
<dbReference type="SUPFAM" id="SSF63562">
    <property type="entry name" value="RPB6/omega subunit-like"/>
    <property type="match status" value="1"/>
</dbReference>
<reference key="1">
    <citation type="journal article" date="2012" name="BMC Microbiol.">
        <title>Genome sequence of Desulfitobacterium hafniense DCB-2, a Gram-positive anaerobe capable of dehalogenation and metal reduction.</title>
        <authorList>
            <person name="Kim S.H."/>
            <person name="Harzman C."/>
            <person name="Davis J.K."/>
            <person name="Hutcheson R."/>
            <person name="Broderick J.B."/>
            <person name="Marsh T.L."/>
            <person name="Tiedje J.M."/>
        </authorList>
    </citation>
    <scope>NUCLEOTIDE SEQUENCE [LARGE SCALE GENOMIC DNA]</scope>
    <source>
        <strain>DSM 10664 / DCB-2</strain>
    </source>
</reference>
<keyword id="KW-0240">DNA-directed RNA polymerase</keyword>
<keyword id="KW-0548">Nucleotidyltransferase</keyword>
<keyword id="KW-0804">Transcription</keyword>
<keyword id="KW-0808">Transferase</keyword>
<evidence type="ECO:0000255" key="1">
    <source>
        <dbReference type="HAMAP-Rule" id="MF_00366"/>
    </source>
</evidence>
<comment type="function">
    <text evidence="1">Promotes RNA polymerase assembly. Latches the N- and C-terminal regions of the beta' subunit thereby facilitating its interaction with the beta and alpha subunits.</text>
</comment>
<comment type="catalytic activity">
    <reaction evidence="1">
        <text>RNA(n) + a ribonucleoside 5'-triphosphate = RNA(n+1) + diphosphate</text>
        <dbReference type="Rhea" id="RHEA:21248"/>
        <dbReference type="Rhea" id="RHEA-COMP:14527"/>
        <dbReference type="Rhea" id="RHEA-COMP:17342"/>
        <dbReference type="ChEBI" id="CHEBI:33019"/>
        <dbReference type="ChEBI" id="CHEBI:61557"/>
        <dbReference type="ChEBI" id="CHEBI:140395"/>
        <dbReference type="EC" id="2.7.7.6"/>
    </reaction>
</comment>
<comment type="subunit">
    <text evidence="1">The RNAP catalytic core consists of 2 alpha, 1 beta, 1 beta' and 1 omega subunit. When a sigma factor is associated with the core the holoenzyme is formed, which can initiate transcription.</text>
</comment>
<comment type="similarity">
    <text evidence="1">Belongs to the RNA polymerase subunit omega family.</text>
</comment>
<feature type="chain" id="PRO_1000194790" description="DNA-directed RNA polymerase subunit omega">
    <location>
        <begin position="1"/>
        <end position="68"/>
    </location>
</feature>
<gene>
    <name evidence="1" type="primary">rpoZ</name>
    <name type="ordered locus">Dhaf_3893</name>
</gene>
<protein>
    <recommendedName>
        <fullName evidence="1">DNA-directed RNA polymerase subunit omega</fullName>
        <shortName evidence="1">RNAP omega subunit</shortName>
        <ecNumber evidence="1">2.7.7.6</ecNumber>
    </recommendedName>
    <alternativeName>
        <fullName evidence="1">RNA polymerase omega subunit</fullName>
    </alternativeName>
    <alternativeName>
        <fullName evidence="1">Transcriptase subunit omega</fullName>
    </alternativeName>
</protein>
<organism>
    <name type="scientific">Desulfitobacterium hafniense (strain DSM 10664 / DCB-2)</name>
    <dbReference type="NCBI Taxonomy" id="272564"/>
    <lineage>
        <taxon>Bacteria</taxon>
        <taxon>Bacillati</taxon>
        <taxon>Bacillota</taxon>
        <taxon>Clostridia</taxon>
        <taxon>Eubacteriales</taxon>
        <taxon>Desulfitobacteriaceae</taxon>
        <taxon>Desulfitobacterium</taxon>
    </lineage>
</organism>
<sequence>MKQPSLDILLSKVDSKYTLVLAAAKRARTLMEDPEFEVNYRGSKPVSLAFDEIAKGKYHFELTREGIK</sequence>
<accession>B8FSC1</accession>
<proteinExistence type="inferred from homology"/>
<name>RPOZ_DESHD</name>